<feature type="chain" id="PRO_0000045266" description="Phosphoprotein">
    <location>
        <begin position="1"/>
        <end position="201"/>
    </location>
</feature>
<feature type="region of interest" description="Disordered" evidence="2">
    <location>
        <begin position="1"/>
        <end position="70"/>
    </location>
</feature>
<feature type="short sequence motif" description="Nuclear localization signal 1">
    <location>
        <begin position="29"/>
        <end position="36"/>
    </location>
</feature>
<feature type="short sequence motif" description="Nuclear localization signal 2">
    <location>
        <begin position="181"/>
        <end position="193"/>
    </location>
</feature>
<feature type="splice variant" id="VSP_018912" description="In isoform p16." evidence="5">
    <location>
        <begin position="1"/>
        <end position="55"/>
    </location>
</feature>
<feature type="sequence variant" description="In strain: C6.">
    <original>R</original>
    <variation>G</variation>
    <location>
        <position position="4"/>
    </location>
</feature>
<feature type="sequence variant" description="In strain: Giessen.">
    <original>E</original>
    <variation>K</variation>
    <location>
        <position position="24"/>
    </location>
</feature>
<feature type="helix" evidence="6">
    <location>
        <begin position="73"/>
        <end position="123"/>
    </location>
</feature>
<feature type="helix" evidence="6">
    <location>
        <begin position="128"/>
        <end position="164"/>
    </location>
</feature>
<organismHost>
    <name type="scientific">Bos taurus</name>
    <name type="common">Bovine</name>
    <dbReference type="NCBI Taxonomy" id="9913"/>
</organismHost>
<organismHost>
    <name type="scientific">Bradypodidae</name>
    <name type="common">three-fingered sloths</name>
    <dbReference type="NCBI Taxonomy" id="9352"/>
</organismHost>
<organismHost>
    <name type="scientific">Capra hircus</name>
    <name type="common">Goat</name>
    <dbReference type="NCBI Taxonomy" id="9925"/>
</organismHost>
<organismHost>
    <name type="scientific">Cervidae</name>
    <name type="common">Deer</name>
    <dbReference type="NCBI Taxonomy" id="9850"/>
</organismHost>
<organismHost>
    <name type="scientific">Crocidura leucodon</name>
    <name type="common">Bicoloured white-toothed shrew</name>
    <name type="synonym">Celebes shrew</name>
    <dbReference type="NCBI Taxonomy" id="109474"/>
</organismHost>
<organismHost>
    <name type="scientific">Equidae</name>
    <name type="common">horses</name>
    <dbReference type="NCBI Taxonomy" id="9788"/>
</organismHost>
<organismHost>
    <name type="scientific">Felis catus</name>
    <name type="common">Cat</name>
    <name type="synonym">Felis silvestris catus</name>
    <dbReference type="NCBI Taxonomy" id="9685"/>
</organismHost>
<organismHost>
    <name type="scientific">Hexaprotodon liberiensis</name>
    <name type="common">Pygmy hippopotamus</name>
    <name type="synonym">Choeropsis liberiensis</name>
    <dbReference type="NCBI Taxonomy" id="56798"/>
</organismHost>
<organismHost>
    <name type="scientific">Lama glama</name>
    <name type="common">Llama</name>
    <dbReference type="NCBI Taxonomy" id="9844"/>
</organismHost>
<organismHost>
    <name type="scientific">Oryctolagus cuniculus</name>
    <name type="common">Rabbit</name>
    <dbReference type="NCBI Taxonomy" id="9986"/>
</organismHost>
<organismHost>
    <name type="scientific">Ovis aries</name>
    <name type="common">Sheep</name>
    <dbReference type="NCBI Taxonomy" id="9940"/>
</organismHost>
<organismHost>
    <name type="scientific">Struthio camelus</name>
    <name type="common">Common ostrich</name>
    <dbReference type="NCBI Taxonomy" id="8801"/>
</organismHost>
<organismHost>
    <name type="scientific">Varecia variegata</name>
    <name type="common">Black-and-white ruffed lemur</name>
    <name type="synonym">Lemur variegatus</name>
    <dbReference type="NCBI Taxonomy" id="9455"/>
</organismHost>
<organismHost>
    <name type="scientific">Vicugna pacos</name>
    <name type="common">Alpaca</name>
    <name type="synonym">Lama pacos</name>
    <dbReference type="NCBI Taxonomy" id="30538"/>
</organismHost>
<dbReference type="EMBL" id="X60701">
    <property type="protein sequence ID" value="CAA43112.1"/>
    <property type="molecule type" value="mRNA"/>
</dbReference>
<dbReference type="EMBL" id="D10473">
    <property type="status" value="NOT_ANNOTATED_CDS"/>
    <property type="molecule type" value="mRNA"/>
</dbReference>
<dbReference type="EMBL" id="L27077">
    <property type="protein sequence ID" value="AAA20664.1"/>
    <property type="molecule type" value="Genomic_RNA"/>
</dbReference>
<dbReference type="EMBL" id="AH004432">
    <property type="protein sequence ID" value="AAB29215.1"/>
    <property type="molecule type" value="Genomic_RNA"/>
</dbReference>
<dbReference type="EMBL" id="S62821">
    <property type="protein sequence ID" value="AAB27263.1"/>
    <property type="molecule type" value="Genomic_RNA"/>
</dbReference>
<dbReference type="PIR" id="C37475">
    <property type="entry name" value="C37475"/>
</dbReference>
<dbReference type="PIR" id="JQ1294">
    <property type="entry name" value="JQ1294"/>
</dbReference>
<dbReference type="PIR" id="JQ1295">
    <property type="entry name" value="JQ1295"/>
</dbReference>
<dbReference type="PIR" id="JQ1407">
    <property type="entry name" value="WMWVBD"/>
</dbReference>
<dbReference type="PDB" id="8B8A">
    <property type="method" value="X-ray"/>
    <property type="resolution" value="2.75 A"/>
    <property type="chains" value="A=65-172"/>
</dbReference>
<dbReference type="PDBsum" id="8B8A"/>
<dbReference type="SMR" id="P0C798"/>
<dbReference type="Proteomes" id="UP000185272">
    <property type="component" value="Genome"/>
</dbReference>
<dbReference type="GO" id="GO:0030430">
    <property type="term" value="C:host cell cytoplasm"/>
    <property type="evidence" value="ECO:0007669"/>
    <property type="project" value="UniProtKB-SubCell"/>
</dbReference>
<dbReference type="GO" id="GO:0042025">
    <property type="term" value="C:host cell nucleus"/>
    <property type="evidence" value="ECO:0007669"/>
    <property type="project" value="UniProtKB-SubCell"/>
</dbReference>
<dbReference type="GO" id="GO:0052170">
    <property type="term" value="P:symbiont-mediated suppression of host innate immune response"/>
    <property type="evidence" value="ECO:0007669"/>
    <property type="project" value="UniProtKB-KW"/>
</dbReference>
<dbReference type="InterPro" id="IPR009517">
    <property type="entry name" value="BDV_P24"/>
</dbReference>
<dbReference type="Pfam" id="PF06595">
    <property type="entry name" value="BDV_P24"/>
    <property type="match status" value="1"/>
</dbReference>
<protein>
    <recommendedName>
        <fullName>Phosphoprotein</fullName>
        <shortName>P protein</shortName>
    </recommendedName>
    <alternativeName>
        <fullName>p23</fullName>
    </alternativeName>
    <alternativeName>
        <fullName>p24</fullName>
    </alternativeName>
</protein>
<evidence type="ECO:0000250" key="1">
    <source>
        <dbReference type="UniProtKB" id="P0C799"/>
    </source>
</evidence>
<evidence type="ECO:0000256" key="2">
    <source>
        <dbReference type="SAM" id="MobiDB-lite"/>
    </source>
</evidence>
<evidence type="ECO:0000269" key="3">
    <source>
    </source>
</evidence>
<evidence type="ECO:0000269" key="4">
    <source>
    </source>
</evidence>
<evidence type="ECO:0000305" key="5"/>
<evidence type="ECO:0007829" key="6">
    <source>
        <dbReference type="PDB" id="8B8A"/>
    </source>
</evidence>
<comment type="function">
    <text evidence="1">Essential component of the RNA polymerase transcription and replication complex. Acts as a scaffold which brings L in close proximity to the N-RNA complex. Plays a role in the segregation of the viral genome in host daughter cells during mitosis by interacting with host HMGB1, a host chromatin-remodeling DNA architectural protein, thereby stabilizing RNP on chromosomes. Interacts with host TBK1 and thus interferes with activation of cellular antiviral state. Inhibits cellular histone acetyltransferase activities.</text>
</comment>
<comment type="subunit">
    <text evidence="1">Homomultimer; only active in its oligomeric state. Interacts with nucleoprotein/N. Interacts with matrix/M protein. Interacts with host TBK1. Interacts with polymerase L. Interacts with host HMGB1; this interaction is required to stabilize RNP on chromosomes.</text>
</comment>
<comment type="subcellular location">
    <subcellularLocation>
        <location evidence="1">Host nucleus</location>
    </subcellularLocation>
    <subcellularLocation>
        <location evidence="1">Host cytoplasm</location>
    </subcellularLocation>
    <text evidence="1">P subcellular localization is modulated by the interaction with protein X.</text>
</comment>
<comment type="alternative products">
    <event type="alternative initiation"/>
    <isoform>
        <id>P0C798-1</id>
        <name>p24</name>
        <sequence type="displayed"/>
    </isoform>
    <isoform>
        <id>P0C798-2</id>
        <name>p16</name>
        <sequence type="described" ref="VSP_018912"/>
    </isoform>
</comment>
<comment type="PTM">
    <text evidence="4">Phosphorylated by host PKC epsilon and casein kinase II.</text>
</comment>
<comment type="miscellaneous">
    <text evidence="3">The P/X gene has two overlapping open reading frames. One encodes the P protein and the other the X protein. The P (p24), X and P'(p16) proteins are produced by ribosomal leaky scanning.</text>
</comment>
<keyword id="KW-0002">3D-structure</keyword>
<keyword id="KW-0024">Alternative initiation</keyword>
<keyword id="KW-0903">Direct protein sequencing</keyword>
<keyword id="KW-1035">Host cytoplasm</keyword>
<keyword id="KW-1048">Host nucleus</keyword>
<keyword id="KW-0945">Host-virus interaction</keyword>
<keyword id="KW-1090">Inhibition of host innate immune response by virus</keyword>
<keyword id="KW-1113">Inhibition of host RLR pathway by virus</keyword>
<keyword id="KW-0597">Phosphoprotein</keyword>
<keyword id="KW-0899">Viral immunoevasion</keyword>
<organism>
    <name type="scientific">Borna disease virus 1</name>
    <name type="common">BoDV-1</name>
    <dbReference type="NCBI Taxonomy" id="1714621"/>
    <lineage>
        <taxon>Viruses</taxon>
        <taxon>Riboviria</taxon>
        <taxon>Orthornavirae</taxon>
        <taxon>Negarnaviricota</taxon>
        <taxon>Haploviricotina</taxon>
        <taxon>Monjiviricetes</taxon>
        <taxon>Mononegavirales</taxon>
        <taxon>Bornaviridae</taxon>
        <taxon>Orthobornavirus</taxon>
        <taxon>Orthobornavirus bornaense</taxon>
    </lineage>
</organism>
<accession>P0C798</accession>
<accession>P26668</accession>
<name>PHOSP_BDV1</name>
<reference key="1">
    <citation type="journal article" date="1992" name="J. Gen. Virol.">
        <title>The 24K protein of Borna disease virus.</title>
        <authorList>
            <person name="Thierer J."/>
            <person name="Riehle H."/>
            <person name="Grebenstein O."/>
            <person name="Binz T."/>
            <person name="Herzog S."/>
            <person name="Thiedemann N."/>
            <person name="Stitz L."/>
            <person name="Rott R."/>
            <person name="Lottspeich F."/>
            <person name="Niemann H."/>
        </authorList>
    </citation>
    <scope>NUCLEOTIDE SEQUENCE [MRNA]</scope>
    <scope>PARTIAL PROTEIN SEQUENCE</scope>
    <source>
        <strain>Giessen / HE/80-3</strain>
    </source>
</reference>
<reference key="2">
    <citation type="journal article" date="1991" name="J. Gen. Virol.">
        <title>Analysis of Borna disease virus-specific RNAs in infected cells and tissues.</title>
        <authorList>
            <person name="Richt J.A."/>
            <person name="Vandewoude S."/>
            <person name="Zink M.C."/>
            <person name="Narayan O."/>
            <person name="Clements J.E."/>
        </authorList>
    </citation>
    <scope>NUCLEOTIDE SEQUENCE [MRNA]</scope>
    <source>
        <strain>Clone B8</strain>
    </source>
</reference>
<reference key="3">
    <citation type="journal article" date="1994" name="J. Virol.">
        <title>Sequence and genome organization of Borna disease virus.</title>
        <authorList>
            <person name="Cubitt B."/>
            <person name="Oldstone C."/>
            <person name="de la Torre J.C."/>
        </authorList>
    </citation>
    <scope>NUCLEOTIDE SEQUENCE [GENOMIC RNA]</scope>
</reference>
<reference key="4">
    <citation type="journal article" date="1994" name="J. Virol.">
        <title>Sequence conservation in field and experimental isolates of Borna disease virus.</title>
        <authorList>
            <person name="Schneider P.A."/>
            <person name="Briese T."/>
            <person name="Zimmermann W."/>
            <person name="Ludwig H."/>
            <person name="Lipkin W.I."/>
        </authorList>
    </citation>
    <scope>NUCLEOTIDE SEQUENCE [GENOMIC RNA]</scope>
    <source>
        <strain>Halle B1/91</strain>
    </source>
</reference>
<reference key="5">
    <citation type="journal article" date="1993" name="Virology">
        <title>Genomic organization of the structural proteins of borna disease virus revealed by a cDNA clone encoding the 38-kDa protein.</title>
        <authorList>
            <person name="Pyper J.M."/>
            <person name="Richt J.A."/>
            <person name="Brown L."/>
            <person name="Rott R."/>
            <person name="Narayan O."/>
            <person name="Clements J.E."/>
        </authorList>
    </citation>
    <scope>NUCLEOTIDE SEQUENCE [GENOMIC RNA]</scope>
    <source>
        <strain>Clone B8</strain>
    </source>
</reference>
<reference key="6">
    <citation type="journal article" date="1997" name="J. Biol. Chem.">
        <title>Borna disease virus P-protein is phosphorylated by protein kinase Cepsilon and casein kinase II.</title>
        <authorList>
            <person name="Schwemmle M."/>
            <person name="De B."/>
            <person name="Shi L."/>
            <person name="Banerjee A."/>
            <person name="Lipkin W.I."/>
        </authorList>
    </citation>
    <scope>PHOSPHORYLATION</scope>
</reference>
<reference key="7">
    <citation type="journal article" date="1998" name="J. Virol.">
        <title>Two proline-rich nuclear localization signals in the amino- and carboxyl-terminal regions of the Borna disease virus phosphoprotein.</title>
        <authorList>
            <person name="Shoya Y."/>
            <person name="Kobayashi T."/>
            <person name="Koda T."/>
            <person name="Ikuta K."/>
            <person name="Kakinuma M."/>
            <person name="Kishi M."/>
        </authorList>
    </citation>
    <scope>SUBCELLULAR LOCATION</scope>
</reference>
<reference key="8">
    <citation type="journal article" date="1998" name="J. Biol. Chem.">
        <title>Interactions of the borna disease virus P, N, and X proteins and their functional implications.</title>
        <authorList>
            <person name="Schwemmle M."/>
            <person name="Salvatore M."/>
            <person name="Shi L."/>
            <person name="Richt J."/>
            <person name="Lee C.H."/>
            <person name="Lipkin W.I."/>
        </authorList>
    </citation>
    <scope>INTERACTION WITH N AND X PROTEINS</scope>
</reference>
<reference key="9">
    <citation type="journal article" date="2000" name="Virology">
        <title>Translation initiation of a bicistronic mRNA of Borna disease virus: a 16-kDa phosphoprotein is initiated at an internal start codon.</title>
        <authorList>
            <person name="Kobayashi T."/>
            <person name="Watanabe M."/>
            <person name="Kamitani W."/>
            <person name="Tomonaga K."/>
            <person name="Ikuta K."/>
        </authorList>
    </citation>
    <scope>ALTERNATIVE INITIATION</scope>
</reference>
<reference key="10">
    <citation type="journal article" date="2002" name="Front. Biosci.">
        <title>Borna disease virus and infection in humans.</title>
        <authorList>
            <person name="Ikuta K."/>
            <person name="Ibrahim M.S."/>
            <person name="Kobayashi T."/>
            <person name="Tomonaga K."/>
        </authorList>
    </citation>
    <scope>REVIEW</scope>
</reference>
<reference key="11">
    <citation type="journal article" date="2005" name="Proc. Natl. Acad. Sci. U.S.A.">
        <title>Viral targeting of the interferon-beta-inducing Traf family member-associated NF-kappa-B activator (TANK)-binding kinase-1.</title>
        <authorList>
            <person name="Unterstab G."/>
            <person name="Ludwig S."/>
            <person name="Anton A."/>
            <person name="Planz O."/>
            <person name="Dauber B."/>
            <person name="Krappmann D."/>
            <person name="Heins G."/>
            <person name="Ehrhardt C."/>
            <person name="Wolff T."/>
        </authorList>
    </citation>
    <scope>INTERACTION WITH HUMAN TBK1</scope>
</reference>
<proteinExistence type="evidence at protein level"/>
<sequence>MATRPSSLVDSLEDEEDPQTLRRERSGSPRPRKIPRNALTQPVDQLLKDLRKNPSMISDPDQRTGREQLSNDELIKKLVTELAENSMIEAEEVRGTLGDISARIEAGFESLSALQVETIQTAQRCDHSDSIRILGENIKILDRSMKTMMETMKLMMEKVDLLYASTAVGTSAPMLPSHPAPPRIYPQLPSAPTADEWDIIP</sequence>
<gene>
    <name type="primary">P/X</name>
</gene>